<protein>
    <recommendedName>
        <fullName>G1/S-specific cyclin-D1</fullName>
    </recommendedName>
</protein>
<keyword id="KW-0131">Cell cycle</keyword>
<keyword id="KW-0132">Cell division</keyword>
<keyword id="KW-0195">Cyclin</keyword>
<keyword id="KW-0963">Cytoplasm</keyword>
<keyword id="KW-0539">Nucleus</keyword>
<keyword id="KW-0597">Phosphoprotein</keyword>
<keyword id="KW-1185">Reference proteome</keyword>
<keyword id="KW-0804">Transcription</keyword>
<keyword id="KW-0805">Transcription regulation</keyword>
<keyword id="KW-0832">Ubl conjugation</keyword>
<sequence length="291" mass="33067">MEHQLFCCEVDTIRRAYQDSNLLNDRVLQTMLKAEENYLPSPNYFKCVQKEIVPKMRKIVATWMLEVCEEQKCEEEVFPLAMNYLDRFLSVEPTKKTRLQLLGATCMFLASKMKETVPLTAEKLCIYTDNSVRPGELLQMELLALNKLKWDLASVTPHDFIEHFLAKLPIHQSSKQILRKHAQTFVALCATDVNFIASPPSMIAAGSVAAAVQGLYLKSTDSCLSSQNLTNFLSQVIRSDPDCLRSCQEQIESLLESSLRQAQQHISTETKRVEEDVDLSCTPTDVRDINI</sequence>
<name>CCND1_DANRE</name>
<organism>
    <name type="scientific">Danio rerio</name>
    <name type="common">Zebrafish</name>
    <name type="synonym">Brachydanio rerio</name>
    <dbReference type="NCBI Taxonomy" id="7955"/>
    <lineage>
        <taxon>Eukaryota</taxon>
        <taxon>Metazoa</taxon>
        <taxon>Chordata</taxon>
        <taxon>Craniata</taxon>
        <taxon>Vertebrata</taxon>
        <taxon>Euteleostomi</taxon>
        <taxon>Actinopterygii</taxon>
        <taxon>Neopterygii</taxon>
        <taxon>Teleostei</taxon>
        <taxon>Ostariophysi</taxon>
        <taxon>Cypriniformes</taxon>
        <taxon>Danionidae</taxon>
        <taxon>Danioninae</taxon>
        <taxon>Danio</taxon>
    </lineage>
</organism>
<gene>
    <name type="primary">ccnd1</name>
    <name type="synonym">cycd1</name>
</gene>
<evidence type="ECO:0000250" key="1">
    <source>
        <dbReference type="UniProtKB" id="P24385"/>
    </source>
</evidence>
<evidence type="ECO:0000305" key="2"/>
<dbReference type="EMBL" id="X87581">
    <property type="protein sequence ID" value="CAA60885.1"/>
    <property type="molecule type" value="mRNA"/>
</dbReference>
<dbReference type="EMBL" id="BC075743">
    <property type="protein sequence ID" value="AAH75743.1"/>
    <property type="molecule type" value="mRNA"/>
</dbReference>
<dbReference type="PIR" id="S62730">
    <property type="entry name" value="S62730"/>
</dbReference>
<dbReference type="RefSeq" id="NP_571100.1">
    <property type="nucleotide sequence ID" value="NM_131025.4"/>
</dbReference>
<dbReference type="SMR" id="Q90459"/>
<dbReference type="FunCoup" id="Q90459">
    <property type="interactions" value="1458"/>
</dbReference>
<dbReference type="STRING" id="7955.ENSDARP00000140550"/>
<dbReference type="PaxDb" id="7955-ENSDARP00000051867"/>
<dbReference type="Ensembl" id="ENSDART00000163748">
    <property type="protein sequence ID" value="ENSDARP00000140550"/>
    <property type="gene ID" value="ENSDARG00000101637"/>
</dbReference>
<dbReference type="Ensembl" id="ENSDART00000165320">
    <property type="protein sequence ID" value="ENSDARP00000134435"/>
    <property type="gene ID" value="ENSDARG00000101637"/>
</dbReference>
<dbReference type="GeneID" id="30222"/>
<dbReference type="KEGG" id="dre:30222"/>
<dbReference type="AGR" id="ZFIN:ZDB-GENE-980526-176"/>
<dbReference type="CTD" id="595"/>
<dbReference type="ZFIN" id="ZDB-GENE-980526-176">
    <property type="gene designation" value="ccnd1"/>
</dbReference>
<dbReference type="eggNOG" id="KOG0656">
    <property type="taxonomic scope" value="Eukaryota"/>
</dbReference>
<dbReference type="HOGENOM" id="CLU_052190_0_0_1"/>
<dbReference type="InParanoid" id="Q90459"/>
<dbReference type="OMA" id="PCELLQM"/>
<dbReference type="OrthoDB" id="306099at2759"/>
<dbReference type="PhylomeDB" id="Q90459"/>
<dbReference type="TreeFam" id="TF101004"/>
<dbReference type="Reactome" id="R-DRE-187577">
    <property type="pathway name" value="SCF(Skp2)-mediated degradation of p27/p21"/>
</dbReference>
<dbReference type="Reactome" id="R-DRE-3214858">
    <property type="pathway name" value="RMTs methylate histone arginines"/>
</dbReference>
<dbReference type="Reactome" id="R-DRE-69231">
    <property type="pathway name" value="Cyclin D associated events in G1"/>
</dbReference>
<dbReference type="Reactome" id="R-DRE-75815">
    <property type="pathway name" value="Ubiquitin-dependent degradation of Cyclin D"/>
</dbReference>
<dbReference type="Reactome" id="R-DRE-8849470">
    <property type="pathway name" value="PTK6 Regulates Cell Cycle"/>
</dbReference>
<dbReference type="Reactome" id="R-DRE-8934593">
    <property type="pathway name" value="Regulation of RUNX1 Expression and Activity"/>
</dbReference>
<dbReference type="Reactome" id="R-DRE-9754119">
    <property type="pathway name" value="Drug-mediated inhibition of CDK4/CDK6 activity"/>
</dbReference>
<dbReference type="PRO" id="PR:Q90459"/>
<dbReference type="Proteomes" id="UP000000437">
    <property type="component" value="Chromosome 7"/>
</dbReference>
<dbReference type="Bgee" id="ENSDARG00000101637">
    <property type="expression patterns" value="Expressed in gastrula and 65 other cell types or tissues"/>
</dbReference>
<dbReference type="ExpressionAtlas" id="Q90459">
    <property type="expression patterns" value="baseline and differential"/>
</dbReference>
<dbReference type="GO" id="GO:0000307">
    <property type="term" value="C:cyclin-dependent protein kinase holoenzyme complex"/>
    <property type="evidence" value="ECO:0000318"/>
    <property type="project" value="GO_Central"/>
</dbReference>
<dbReference type="GO" id="GO:0005737">
    <property type="term" value="C:cytoplasm"/>
    <property type="evidence" value="ECO:0000318"/>
    <property type="project" value="GO_Central"/>
</dbReference>
<dbReference type="GO" id="GO:0005815">
    <property type="term" value="C:microtubule organizing center"/>
    <property type="evidence" value="ECO:0000318"/>
    <property type="project" value="GO_Central"/>
</dbReference>
<dbReference type="GO" id="GO:0005634">
    <property type="term" value="C:nucleus"/>
    <property type="evidence" value="ECO:0000250"/>
    <property type="project" value="UniProtKB"/>
</dbReference>
<dbReference type="GO" id="GO:0017053">
    <property type="term" value="C:transcription repressor complex"/>
    <property type="evidence" value="ECO:0000250"/>
    <property type="project" value="UniProtKB"/>
</dbReference>
<dbReference type="GO" id="GO:0016538">
    <property type="term" value="F:cyclin-dependent protein serine/threonine kinase regulator activity"/>
    <property type="evidence" value="ECO:0000318"/>
    <property type="project" value="GO_Central"/>
</dbReference>
<dbReference type="GO" id="GO:0003714">
    <property type="term" value="F:transcription corepressor activity"/>
    <property type="evidence" value="ECO:0000250"/>
    <property type="project" value="UniProtKB"/>
</dbReference>
<dbReference type="GO" id="GO:0048593">
    <property type="term" value="P:camera-type eye morphogenesis"/>
    <property type="evidence" value="ECO:0000315"/>
    <property type="project" value="ZFIN"/>
</dbReference>
<dbReference type="GO" id="GO:0051301">
    <property type="term" value="P:cell division"/>
    <property type="evidence" value="ECO:0007669"/>
    <property type="project" value="UniProtKB-KW"/>
</dbReference>
<dbReference type="GO" id="GO:0006974">
    <property type="term" value="P:DNA damage response"/>
    <property type="evidence" value="ECO:0000250"/>
    <property type="project" value="UniProtKB"/>
</dbReference>
<dbReference type="GO" id="GO:0000082">
    <property type="term" value="P:G1/S transition of mitotic cell cycle"/>
    <property type="evidence" value="ECO:0000250"/>
    <property type="project" value="UniProtKB"/>
</dbReference>
<dbReference type="GO" id="GO:0031571">
    <property type="term" value="P:mitotic G1 DNA damage checkpoint signaling"/>
    <property type="evidence" value="ECO:0000250"/>
    <property type="project" value="UniProtKB"/>
</dbReference>
<dbReference type="GO" id="GO:0000122">
    <property type="term" value="P:negative regulation of transcription by RNA polymerase II"/>
    <property type="evidence" value="ECO:0000250"/>
    <property type="project" value="UniProtKB"/>
</dbReference>
<dbReference type="GO" id="GO:0070050">
    <property type="term" value="P:neuron cellular homeostasis"/>
    <property type="evidence" value="ECO:0000315"/>
    <property type="project" value="ZFIN"/>
</dbReference>
<dbReference type="GO" id="GO:1900087">
    <property type="term" value="P:positive regulation of G1/S transition of mitotic cell cycle"/>
    <property type="evidence" value="ECO:0000318"/>
    <property type="project" value="GO_Central"/>
</dbReference>
<dbReference type="GO" id="GO:0010971">
    <property type="term" value="P:positive regulation of G2/M transition of mitotic cell cycle"/>
    <property type="evidence" value="ECO:0000250"/>
    <property type="project" value="UniProtKB"/>
</dbReference>
<dbReference type="GO" id="GO:0061074">
    <property type="term" value="P:regulation of neural retina development"/>
    <property type="evidence" value="ECO:0000316"/>
    <property type="project" value="ZFIN"/>
</dbReference>
<dbReference type="CDD" id="cd20573">
    <property type="entry name" value="CYCLIN_CCND1_rpt1"/>
    <property type="match status" value="1"/>
</dbReference>
<dbReference type="CDD" id="cd20576">
    <property type="entry name" value="CYCLIN_CCND1_rpt2"/>
    <property type="match status" value="1"/>
</dbReference>
<dbReference type="FunFam" id="1.10.472.10:FF:000120">
    <property type="entry name" value="G1/S-specific cyclin-D1"/>
    <property type="match status" value="1"/>
</dbReference>
<dbReference type="Gene3D" id="1.10.472.10">
    <property type="entry name" value="Cyclin-like"/>
    <property type="match status" value="2"/>
</dbReference>
<dbReference type="InterPro" id="IPR039361">
    <property type="entry name" value="Cyclin"/>
</dbReference>
<dbReference type="InterPro" id="IPR013763">
    <property type="entry name" value="Cyclin-like_dom"/>
</dbReference>
<dbReference type="InterPro" id="IPR036915">
    <property type="entry name" value="Cyclin-like_sf"/>
</dbReference>
<dbReference type="InterPro" id="IPR004367">
    <property type="entry name" value="Cyclin_C-dom"/>
</dbReference>
<dbReference type="InterPro" id="IPR006671">
    <property type="entry name" value="Cyclin_N"/>
</dbReference>
<dbReference type="InterPro" id="IPR048258">
    <property type="entry name" value="Cyclins_cyclin-box"/>
</dbReference>
<dbReference type="PANTHER" id="PTHR10177">
    <property type="entry name" value="CYCLINS"/>
    <property type="match status" value="1"/>
</dbReference>
<dbReference type="Pfam" id="PF02984">
    <property type="entry name" value="Cyclin_C"/>
    <property type="match status" value="1"/>
</dbReference>
<dbReference type="Pfam" id="PF00134">
    <property type="entry name" value="Cyclin_N"/>
    <property type="match status" value="1"/>
</dbReference>
<dbReference type="SMART" id="SM00385">
    <property type="entry name" value="CYCLIN"/>
    <property type="match status" value="1"/>
</dbReference>
<dbReference type="SMART" id="SM01332">
    <property type="entry name" value="Cyclin_C"/>
    <property type="match status" value="1"/>
</dbReference>
<dbReference type="SUPFAM" id="SSF47954">
    <property type="entry name" value="Cyclin-like"/>
    <property type="match status" value="2"/>
</dbReference>
<dbReference type="PROSITE" id="PS00292">
    <property type="entry name" value="CYCLINS"/>
    <property type="match status" value="1"/>
</dbReference>
<proteinExistence type="evidence at transcript level"/>
<reference key="1">
    <citation type="journal article" date="1995" name="Biochim. Biophys. Acta">
        <title>Zebrafish cyclin D1 is differentially expressed during early embryogenesis.</title>
        <authorList>
            <person name="Yarden A."/>
            <person name="Salomon D."/>
            <person name="Geiger B."/>
        </authorList>
    </citation>
    <scope>NUCLEOTIDE SEQUENCE [MRNA]</scope>
</reference>
<reference key="2">
    <citation type="submission" date="2004-07" db="EMBL/GenBank/DDBJ databases">
        <authorList>
            <consortium name="NIH - Zebrafish Gene Collection (ZGC) project"/>
        </authorList>
    </citation>
    <scope>NUCLEOTIDE SEQUENCE [LARGE SCALE MRNA]</scope>
    <source>
        <tissue>Embryo</tissue>
    </source>
</reference>
<accession>Q90459</accession>
<feature type="chain" id="PRO_0000080435" description="G1/S-specific cyclin-D1">
    <location>
        <begin position="1"/>
        <end position="291"/>
    </location>
</feature>
<feature type="modified residue" description="Phosphothreonine" evidence="1">
    <location>
        <position position="282"/>
    </location>
</feature>
<comment type="function">
    <text evidence="1">Regulatory component of the cyclin D1-CDK4 (DC) complex that phosphorylates and inhibits members of the retinoblastoma (RB) protein family including RB1 and regulates the cell-cycle during G(1)/S transition. Phosphorylation of RB1 allows dissociation of the transcription factor E2F from the RB/E2F complex and the subsequent transcription of E2F target genes which are responsible for the progression through the G(1) phase. Hypophosphorylates RB1 in early G(1) phase. Cyclin D-CDK4 complexes are major integrators of various mitogenenic and antimitogenic signals.</text>
</comment>
<comment type="subunit">
    <text evidence="1">Interacts with the CDK4 and CDK6 protein kinases to form a serine/threonine kinase holoenzyme complex (By similarity). The cyclin subunit imparts substrate specificity to the complex (By similarity).</text>
</comment>
<comment type="subcellular location">
    <subcellularLocation>
        <location evidence="1">Nucleus</location>
    </subcellularLocation>
    <subcellularLocation>
        <location evidence="1">Cytoplasm</location>
    </subcellularLocation>
</comment>
<comment type="PTM">
    <text evidence="1">Phosphorylation at Thr-282 by MAP kinases is required for ubiquitination and degradation by the DCX(AMBRA1) complex.</text>
</comment>
<comment type="PTM">
    <text evidence="1">Ubiquitinated by the DCX(AMBRA1) complex during the transition from G1 to S cell phase, leading to its degradation. The DCX(AMBRA1) complex represents the major regulator of CCND1 stability during the G1/S transition.</text>
</comment>
<comment type="similarity">
    <text evidence="2">Belongs to the cyclin family. Cyclin D subfamily.</text>
</comment>